<name>CYB_CARBR</name>
<geneLocation type="mitochondrion"/>
<keyword id="KW-0249">Electron transport</keyword>
<keyword id="KW-0349">Heme</keyword>
<keyword id="KW-0408">Iron</keyword>
<keyword id="KW-0472">Membrane</keyword>
<keyword id="KW-0479">Metal-binding</keyword>
<keyword id="KW-0496">Mitochondrion</keyword>
<keyword id="KW-0999">Mitochondrion inner membrane</keyword>
<keyword id="KW-0679">Respiratory chain</keyword>
<keyword id="KW-0812">Transmembrane</keyword>
<keyword id="KW-1133">Transmembrane helix</keyword>
<keyword id="KW-0813">Transport</keyword>
<keyword id="KW-0830">Ubiquinone</keyword>
<evidence type="ECO:0000250" key="1"/>
<evidence type="ECO:0000250" key="2">
    <source>
        <dbReference type="UniProtKB" id="P00157"/>
    </source>
</evidence>
<evidence type="ECO:0000255" key="3">
    <source>
        <dbReference type="PROSITE-ProRule" id="PRU00967"/>
    </source>
</evidence>
<evidence type="ECO:0000255" key="4">
    <source>
        <dbReference type="PROSITE-ProRule" id="PRU00968"/>
    </source>
</evidence>
<sequence length="379" mass="42548">MTNIRKTHPLLKIVNSSFVDLPAPSSLSSWWNFGSLLGVCLAVQILTGLFLAMHYTSDTATAFNSVTHICRDVNYGWVLRYLHANGASMFFICLYLHVGRGLYYGSYTYSETWNVGILLLFAVMATAFMGYVLPWGQMSFWGATVITNLLSAIPYIGTDLVQWIWGGFSVDKATLTRFFAFHFLLPFVVAALVMVHLLFLHETGSNNPTGIPSDSDMIPFHPYYTIKDILGFLVMLTALSTLVLFSPDLLGDPDNYTPANPLSTPPHIKPEWYFLFAYAILRSIPNKLGGVLALVLSILILAIVPMLHMSKQRSMMFRPLSQCLFWLLVAVLFTLTWIGGQPVEHPYIIIGQMASILYFLIILVLMPLISIVENRLLSW</sequence>
<feature type="chain" id="PRO_0000060733" description="Cytochrome b">
    <location>
        <begin position="1"/>
        <end position="379"/>
    </location>
</feature>
<feature type="transmembrane region" description="Helical" evidence="2">
    <location>
        <begin position="33"/>
        <end position="53"/>
    </location>
</feature>
<feature type="transmembrane region" description="Helical" evidence="2">
    <location>
        <begin position="77"/>
        <end position="98"/>
    </location>
</feature>
<feature type="transmembrane region" description="Helical" evidence="2">
    <location>
        <begin position="113"/>
        <end position="133"/>
    </location>
</feature>
<feature type="transmembrane region" description="Helical" evidence="2">
    <location>
        <begin position="178"/>
        <end position="198"/>
    </location>
</feature>
<feature type="transmembrane region" description="Helical" evidence="2">
    <location>
        <begin position="226"/>
        <end position="246"/>
    </location>
</feature>
<feature type="transmembrane region" description="Helical" evidence="2">
    <location>
        <begin position="288"/>
        <end position="308"/>
    </location>
</feature>
<feature type="transmembrane region" description="Helical" evidence="2">
    <location>
        <begin position="320"/>
        <end position="340"/>
    </location>
</feature>
<feature type="transmembrane region" description="Helical" evidence="2">
    <location>
        <begin position="347"/>
        <end position="367"/>
    </location>
</feature>
<feature type="binding site" description="axial binding residue" evidence="2">
    <location>
        <position position="83"/>
    </location>
    <ligand>
        <name>heme b</name>
        <dbReference type="ChEBI" id="CHEBI:60344"/>
        <label>b562</label>
    </ligand>
    <ligandPart>
        <name>Fe</name>
        <dbReference type="ChEBI" id="CHEBI:18248"/>
    </ligandPart>
</feature>
<feature type="binding site" description="axial binding residue" evidence="2">
    <location>
        <position position="97"/>
    </location>
    <ligand>
        <name>heme b</name>
        <dbReference type="ChEBI" id="CHEBI:60344"/>
        <label>b566</label>
    </ligand>
    <ligandPart>
        <name>Fe</name>
        <dbReference type="ChEBI" id="CHEBI:18248"/>
    </ligandPart>
</feature>
<feature type="binding site" description="axial binding residue" evidence="2">
    <location>
        <position position="182"/>
    </location>
    <ligand>
        <name>heme b</name>
        <dbReference type="ChEBI" id="CHEBI:60344"/>
        <label>b562</label>
    </ligand>
    <ligandPart>
        <name>Fe</name>
        <dbReference type="ChEBI" id="CHEBI:18248"/>
    </ligandPart>
</feature>
<feature type="binding site" description="axial binding residue" evidence="2">
    <location>
        <position position="196"/>
    </location>
    <ligand>
        <name>heme b</name>
        <dbReference type="ChEBI" id="CHEBI:60344"/>
        <label>b566</label>
    </ligand>
    <ligandPart>
        <name>Fe</name>
        <dbReference type="ChEBI" id="CHEBI:18248"/>
    </ligandPart>
</feature>
<feature type="binding site" evidence="2">
    <location>
        <position position="201"/>
    </location>
    <ligand>
        <name>a ubiquinone</name>
        <dbReference type="ChEBI" id="CHEBI:16389"/>
    </ligand>
</feature>
<protein>
    <recommendedName>
        <fullName>Cytochrome b</fullName>
    </recommendedName>
    <alternativeName>
        <fullName>Complex III subunit 3</fullName>
    </alternativeName>
    <alternativeName>
        <fullName>Complex III subunit III</fullName>
    </alternativeName>
    <alternativeName>
        <fullName>Cytochrome b-c1 complex subunit 3</fullName>
    </alternativeName>
    <alternativeName>
        <fullName>Ubiquinol-cytochrome-c reductase complex cytochrome b subunit</fullName>
    </alternativeName>
</protein>
<dbReference type="EMBL" id="AF187017">
    <property type="protein sequence ID" value="AAG25898.1"/>
    <property type="molecule type" value="Genomic_DNA"/>
</dbReference>
<dbReference type="SMR" id="Q9GAP0"/>
<dbReference type="GO" id="GO:0005743">
    <property type="term" value="C:mitochondrial inner membrane"/>
    <property type="evidence" value="ECO:0007669"/>
    <property type="project" value="UniProtKB-SubCell"/>
</dbReference>
<dbReference type="GO" id="GO:0045275">
    <property type="term" value="C:respiratory chain complex III"/>
    <property type="evidence" value="ECO:0007669"/>
    <property type="project" value="InterPro"/>
</dbReference>
<dbReference type="GO" id="GO:0046872">
    <property type="term" value="F:metal ion binding"/>
    <property type="evidence" value="ECO:0007669"/>
    <property type="project" value="UniProtKB-KW"/>
</dbReference>
<dbReference type="GO" id="GO:0008121">
    <property type="term" value="F:ubiquinol-cytochrome-c reductase activity"/>
    <property type="evidence" value="ECO:0007669"/>
    <property type="project" value="InterPro"/>
</dbReference>
<dbReference type="GO" id="GO:0006122">
    <property type="term" value="P:mitochondrial electron transport, ubiquinol to cytochrome c"/>
    <property type="evidence" value="ECO:0007669"/>
    <property type="project" value="TreeGrafter"/>
</dbReference>
<dbReference type="CDD" id="cd00290">
    <property type="entry name" value="cytochrome_b_C"/>
    <property type="match status" value="1"/>
</dbReference>
<dbReference type="CDD" id="cd00284">
    <property type="entry name" value="Cytochrome_b_N"/>
    <property type="match status" value="1"/>
</dbReference>
<dbReference type="FunFam" id="1.20.810.10:FF:000002">
    <property type="entry name" value="Cytochrome b"/>
    <property type="match status" value="1"/>
</dbReference>
<dbReference type="Gene3D" id="1.20.810.10">
    <property type="entry name" value="Cytochrome Bc1 Complex, Chain C"/>
    <property type="match status" value="1"/>
</dbReference>
<dbReference type="InterPro" id="IPR005798">
    <property type="entry name" value="Cyt_b/b6_C"/>
</dbReference>
<dbReference type="InterPro" id="IPR036150">
    <property type="entry name" value="Cyt_b/b6_C_sf"/>
</dbReference>
<dbReference type="InterPro" id="IPR005797">
    <property type="entry name" value="Cyt_b/b6_N"/>
</dbReference>
<dbReference type="InterPro" id="IPR027387">
    <property type="entry name" value="Cytb/b6-like_sf"/>
</dbReference>
<dbReference type="InterPro" id="IPR030689">
    <property type="entry name" value="Cytochrome_b"/>
</dbReference>
<dbReference type="InterPro" id="IPR048260">
    <property type="entry name" value="Cytochrome_b_C_euk/bac"/>
</dbReference>
<dbReference type="InterPro" id="IPR048259">
    <property type="entry name" value="Cytochrome_b_N_euk/bac"/>
</dbReference>
<dbReference type="InterPro" id="IPR016174">
    <property type="entry name" value="Di-haem_cyt_TM"/>
</dbReference>
<dbReference type="PANTHER" id="PTHR19271">
    <property type="entry name" value="CYTOCHROME B"/>
    <property type="match status" value="1"/>
</dbReference>
<dbReference type="PANTHER" id="PTHR19271:SF16">
    <property type="entry name" value="CYTOCHROME B"/>
    <property type="match status" value="1"/>
</dbReference>
<dbReference type="Pfam" id="PF00032">
    <property type="entry name" value="Cytochrom_B_C"/>
    <property type="match status" value="1"/>
</dbReference>
<dbReference type="Pfam" id="PF00033">
    <property type="entry name" value="Cytochrome_B"/>
    <property type="match status" value="1"/>
</dbReference>
<dbReference type="PIRSF" id="PIRSF038885">
    <property type="entry name" value="COB"/>
    <property type="match status" value="1"/>
</dbReference>
<dbReference type="SUPFAM" id="SSF81648">
    <property type="entry name" value="a domain/subunit of cytochrome bc1 complex (Ubiquinol-cytochrome c reductase)"/>
    <property type="match status" value="1"/>
</dbReference>
<dbReference type="SUPFAM" id="SSF81342">
    <property type="entry name" value="Transmembrane di-heme cytochromes"/>
    <property type="match status" value="1"/>
</dbReference>
<dbReference type="PROSITE" id="PS51003">
    <property type="entry name" value="CYTB_CTER"/>
    <property type="match status" value="1"/>
</dbReference>
<dbReference type="PROSITE" id="PS51002">
    <property type="entry name" value="CYTB_NTER"/>
    <property type="match status" value="1"/>
</dbReference>
<organism>
    <name type="scientific">Carollia brevicauda</name>
    <name type="common">Silky short-tailed bat</name>
    <dbReference type="NCBI Taxonomy" id="138695"/>
    <lineage>
        <taxon>Eukaryota</taxon>
        <taxon>Metazoa</taxon>
        <taxon>Chordata</taxon>
        <taxon>Craniata</taxon>
        <taxon>Vertebrata</taxon>
        <taxon>Euteleostomi</taxon>
        <taxon>Mammalia</taxon>
        <taxon>Eutheria</taxon>
        <taxon>Laurasiatheria</taxon>
        <taxon>Chiroptera</taxon>
        <taxon>Yangochiroptera</taxon>
        <taxon>Phyllostomidae</taxon>
        <taxon>Carolliinae</taxon>
        <taxon>Carollia</taxon>
    </lineage>
</organism>
<reference key="1">
    <citation type="journal article" date="1999" name="J. Mammal.">
        <title>Systematics of the genera Carollia and Rhinophylla based on the cytochrome b gene.</title>
        <authorList>
            <person name="Wright A.J."/>
            <person name="Van Den Bussche R.A."/>
            <person name="Lim B.K."/>
            <person name="Engstrom M.D."/>
            <person name="Baker R.J."/>
        </authorList>
    </citation>
    <scope>NUCLEOTIDE SEQUENCE [GENOMIC DNA]</scope>
    <source>
        <strain>Isolate FN-31805</strain>
    </source>
</reference>
<comment type="function">
    <text evidence="2">Component of the ubiquinol-cytochrome c reductase complex (complex III or cytochrome b-c1 complex) that is part of the mitochondrial respiratory chain. The b-c1 complex mediates electron transfer from ubiquinol to cytochrome c. Contributes to the generation of a proton gradient across the mitochondrial membrane that is then used for ATP synthesis.</text>
</comment>
<comment type="cofactor">
    <cofactor evidence="2">
        <name>heme b</name>
        <dbReference type="ChEBI" id="CHEBI:60344"/>
    </cofactor>
    <text evidence="2">Binds 2 heme b groups non-covalently.</text>
</comment>
<comment type="subunit">
    <text evidence="2">The cytochrome bc1 complex contains 11 subunits: 3 respiratory subunits (MT-CYB, CYC1 and UQCRFS1), 2 core proteins (UQCRC1 and UQCRC2) and 6 low-molecular weight proteins (UQCRH/QCR6, UQCRB/QCR7, UQCRQ/QCR8, UQCR10/QCR9, UQCR11/QCR10 and a cleavage product of UQCRFS1). This cytochrome bc1 complex then forms a dimer.</text>
</comment>
<comment type="subcellular location">
    <subcellularLocation>
        <location evidence="2">Mitochondrion inner membrane</location>
        <topology evidence="2">Multi-pass membrane protein</topology>
    </subcellularLocation>
</comment>
<comment type="miscellaneous">
    <text evidence="1">Heme 1 (or BL or b562) is low-potential and absorbs at about 562 nm, and heme 2 (or BH or b566) is high-potential and absorbs at about 566 nm.</text>
</comment>
<comment type="similarity">
    <text evidence="3 4">Belongs to the cytochrome b family.</text>
</comment>
<comment type="caution">
    <text evidence="2">The full-length protein contains only eight transmembrane helices, not nine as predicted by bioinformatics tools.</text>
</comment>
<gene>
    <name type="primary">MT-CYB</name>
    <name type="synonym">COB</name>
    <name type="synonym">CYTB</name>
    <name type="synonym">MTCYB</name>
</gene>
<accession>Q9GAP0</accession>
<proteinExistence type="inferred from homology"/>